<dbReference type="EC" id="3.4.16.6"/>
<dbReference type="EMBL" id="CH476617">
    <property type="protein sequence ID" value="EEP80880.1"/>
    <property type="molecule type" value="Genomic_DNA"/>
</dbReference>
<dbReference type="RefSeq" id="XP_002585033.1">
    <property type="nucleotide sequence ID" value="XM_002584987.1"/>
</dbReference>
<dbReference type="SMR" id="C4JTD3"/>
<dbReference type="FunCoup" id="C4JTD3">
    <property type="interactions" value="101"/>
</dbReference>
<dbReference type="STRING" id="336963.C4JTD3"/>
<dbReference type="ESTHER" id="uncre-kex1">
    <property type="family name" value="Carboxypeptidase_S10"/>
</dbReference>
<dbReference type="MEROPS" id="S10.007"/>
<dbReference type="GlyCosmos" id="C4JTD3">
    <property type="glycosylation" value="6 sites, No reported glycans"/>
</dbReference>
<dbReference type="GeneID" id="8439360"/>
<dbReference type="KEGG" id="ure:UREG_05722"/>
<dbReference type="VEuPathDB" id="FungiDB:UREG_05722"/>
<dbReference type="eggNOG" id="KOG1282">
    <property type="taxonomic scope" value="Eukaryota"/>
</dbReference>
<dbReference type="HOGENOM" id="CLU_008523_11_0_1"/>
<dbReference type="InParanoid" id="C4JTD3"/>
<dbReference type="OMA" id="EMADQFV"/>
<dbReference type="OrthoDB" id="443318at2759"/>
<dbReference type="Proteomes" id="UP000002058">
    <property type="component" value="Unassembled WGS sequence"/>
</dbReference>
<dbReference type="GO" id="GO:0016020">
    <property type="term" value="C:membrane"/>
    <property type="evidence" value="ECO:0007669"/>
    <property type="project" value="UniProtKB-KW"/>
</dbReference>
<dbReference type="GO" id="GO:0005802">
    <property type="term" value="C:trans-Golgi network"/>
    <property type="evidence" value="ECO:0007669"/>
    <property type="project" value="TreeGrafter"/>
</dbReference>
<dbReference type="GO" id="GO:0004185">
    <property type="term" value="F:serine-type carboxypeptidase activity"/>
    <property type="evidence" value="ECO:0007669"/>
    <property type="project" value="UniProtKB-EC"/>
</dbReference>
<dbReference type="GO" id="GO:0006915">
    <property type="term" value="P:apoptotic process"/>
    <property type="evidence" value="ECO:0007669"/>
    <property type="project" value="UniProtKB-KW"/>
</dbReference>
<dbReference type="GO" id="GO:0006508">
    <property type="term" value="P:proteolysis"/>
    <property type="evidence" value="ECO:0007669"/>
    <property type="project" value="UniProtKB-KW"/>
</dbReference>
<dbReference type="FunFam" id="3.40.50.1820:FF:000121">
    <property type="entry name" value="Carboxypeptidase D"/>
    <property type="match status" value="1"/>
</dbReference>
<dbReference type="Gene3D" id="3.40.50.1820">
    <property type="entry name" value="alpha/beta hydrolase"/>
    <property type="match status" value="1"/>
</dbReference>
<dbReference type="InterPro" id="IPR029058">
    <property type="entry name" value="AB_hydrolase_fold"/>
</dbReference>
<dbReference type="InterPro" id="IPR001563">
    <property type="entry name" value="Peptidase_S10"/>
</dbReference>
<dbReference type="PANTHER" id="PTHR11802:SF190">
    <property type="entry name" value="PHEROMONE-PROCESSING CARBOXYPEPTIDASE KEX1"/>
    <property type="match status" value="1"/>
</dbReference>
<dbReference type="PANTHER" id="PTHR11802">
    <property type="entry name" value="SERINE PROTEASE FAMILY S10 SERINE CARBOXYPEPTIDASE"/>
    <property type="match status" value="1"/>
</dbReference>
<dbReference type="Pfam" id="PF00450">
    <property type="entry name" value="Peptidase_S10"/>
    <property type="match status" value="1"/>
</dbReference>
<dbReference type="PRINTS" id="PR00724">
    <property type="entry name" value="CRBOXYPTASEC"/>
</dbReference>
<dbReference type="SUPFAM" id="SSF53474">
    <property type="entry name" value="alpha/beta-Hydrolases"/>
    <property type="match status" value="1"/>
</dbReference>
<reference key="1">
    <citation type="journal article" date="2009" name="Genome Res.">
        <title>Comparative genomic analyses of the human fungal pathogens Coccidioides and their relatives.</title>
        <authorList>
            <person name="Sharpton T.J."/>
            <person name="Stajich J.E."/>
            <person name="Rounsley S.D."/>
            <person name="Gardner M.J."/>
            <person name="Wortman J.R."/>
            <person name="Jordar V.S."/>
            <person name="Maiti R."/>
            <person name="Kodira C.D."/>
            <person name="Neafsey D.E."/>
            <person name="Zeng Q."/>
            <person name="Hung C.-Y."/>
            <person name="McMahan C."/>
            <person name="Muszewska A."/>
            <person name="Grynberg M."/>
            <person name="Mandel M.A."/>
            <person name="Kellner E.M."/>
            <person name="Barker B.M."/>
            <person name="Galgiani J.N."/>
            <person name="Orbach M.J."/>
            <person name="Kirkland T.N."/>
            <person name="Cole G.T."/>
            <person name="Henn M.R."/>
            <person name="Birren B.W."/>
            <person name="Taylor J.W."/>
        </authorList>
    </citation>
    <scope>NUCLEOTIDE SEQUENCE [LARGE SCALE GENOMIC DNA]</scope>
    <source>
        <strain>UAMH 1704</strain>
    </source>
</reference>
<gene>
    <name type="primary">KEX1</name>
    <name type="ORF">UREG_05722</name>
</gene>
<evidence type="ECO:0000250" key="1"/>
<evidence type="ECO:0000255" key="2"/>
<evidence type="ECO:0000256" key="3">
    <source>
        <dbReference type="SAM" id="MobiDB-lite"/>
    </source>
</evidence>
<evidence type="ECO:0000305" key="4"/>
<organism>
    <name type="scientific">Uncinocarpus reesii (strain UAMH 1704)</name>
    <dbReference type="NCBI Taxonomy" id="336963"/>
    <lineage>
        <taxon>Eukaryota</taxon>
        <taxon>Fungi</taxon>
        <taxon>Dikarya</taxon>
        <taxon>Ascomycota</taxon>
        <taxon>Pezizomycotina</taxon>
        <taxon>Eurotiomycetes</taxon>
        <taxon>Eurotiomycetidae</taxon>
        <taxon>Onygenales</taxon>
        <taxon>Onygenaceae</taxon>
        <taxon>Uncinocarpus</taxon>
    </lineage>
</organism>
<feature type="signal peptide" evidence="2">
    <location>
        <begin position="1"/>
        <end position="32"/>
    </location>
</feature>
<feature type="chain" id="PRO_0000411949" description="Pheromone-processing carboxypeptidase KEX1">
    <location>
        <begin position="33"/>
        <end position="638"/>
    </location>
</feature>
<feature type="topological domain" description="Lumenal" evidence="2">
    <location>
        <begin position="33"/>
        <end position="519"/>
    </location>
</feature>
<feature type="transmembrane region" description="Helical" evidence="2">
    <location>
        <begin position="520"/>
        <end position="540"/>
    </location>
</feature>
<feature type="topological domain" description="Cytoplasmic" evidence="2">
    <location>
        <begin position="541"/>
        <end position="638"/>
    </location>
</feature>
<feature type="region of interest" description="Disordered" evidence="3">
    <location>
        <begin position="586"/>
        <end position="638"/>
    </location>
</feature>
<feature type="compositionally biased region" description="Basic and acidic residues" evidence="3">
    <location>
        <begin position="590"/>
        <end position="599"/>
    </location>
</feature>
<feature type="compositionally biased region" description="Basic and acidic residues" evidence="3">
    <location>
        <begin position="617"/>
        <end position="630"/>
    </location>
</feature>
<feature type="active site" evidence="1">
    <location>
        <position position="184"/>
    </location>
</feature>
<feature type="active site" evidence="1">
    <location>
        <position position="386"/>
    </location>
</feature>
<feature type="active site" evidence="1">
    <location>
        <position position="448"/>
    </location>
</feature>
<feature type="glycosylation site" description="N-linked (GlcNAc...) asparagine" evidence="2">
    <location>
        <position position="203"/>
    </location>
</feature>
<feature type="glycosylation site" description="N-linked (GlcNAc...) asparagine" evidence="2">
    <location>
        <position position="246"/>
    </location>
</feature>
<feature type="glycosylation site" description="N-linked (GlcNAc...) asparagine" evidence="2">
    <location>
        <position position="291"/>
    </location>
</feature>
<feature type="glycosylation site" description="N-linked (GlcNAc...) asparagine" evidence="2">
    <location>
        <position position="437"/>
    </location>
</feature>
<feature type="glycosylation site" description="N-linked (GlcNAc...) asparagine" evidence="2">
    <location>
        <position position="445"/>
    </location>
</feature>
<feature type="glycosylation site" description="N-linked (GlcNAc...) asparagine" evidence="2">
    <location>
        <position position="497"/>
    </location>
</feature>
<accession>C4JTD3</accession>
<name>KEX1_UNCRE</name>
<keyword id="KW-0053">Apoptosis</keyword>
<keyword id="KW-0121">Carboxypeptidase</keyword>
<keyword id="KW-0325">Glycoprotein</keyword>
<keyword id="KW-0333">Golgi apparatus</keyword>
<keyword id="KW-0378">Hydrolase</keyword>
<keyword id="KW-0472">Membrane</keyword>
<keyword id="KW-0645">Protease</keyword>
<keyword id="KW-1185">Reference proteome</keyword>
<keyword id="KW-0732">Signal</keyword>
<keyword id="KW-0812">Transmembrane</keyword>
<keyword id="KW-1133">Transmembrane helix</keyword>
<comment type="function">
    <text evidence="1">Protease with a carboxypeptidase B-like function involved in the C-terminal processing of the lysine and arginine residues from protein precursors. Promotes cell fusion and is involved in the programmed cell death (By similarity).</text>
</comment>
<comment type="catalytic activity">
    <reaction>
        <text>Preferential release of a C-terminal arginine or lysine residue.</text>
        <dbReference type="EC" id="3.4.16.6"/>
    </reaction>
</comment>
<comment type="subcellular location">
    <subcellularLocation>
        <location evidence="1">Golgi apparatus</location>
        <location evidence="1">trans-Golgi network membrane</location>
        <topology evidence="1">Single-pass type I membrane protein</topology>
    </subcellularLocation>
</comment>
<comment type="similarity">
    <text evidence="4">Belongs to the peptidase S10 family.</text>
</comment>
<sequence length="638" mass="71903">MSSCQPPPFLSSMVVRWLSVWIILASSAFASAKCAADYYVRSLPGQPEGPLLKMHAGHIEVDHENNGNLFFWHFQNRHIANRQRTVIWLNGGPGCSSMDGAMMEVGPYRLKDDHTLKYNEGSWDEFANLLFVDQPVGTGYSYANTNSYLHELDEMAAHFVTFMERWFELFPEYEHDDLYFAGESYAGQYIPYIAKAILDRNKNETVIAQRRLWHLKGLLIGNGWFSPVEQYLSYLPYVYKEGMVKNDSDEAKGIERAHSDCVAELDRAKGDVKIHVDVCEKILSAILDVSNKSGHCVNMYDVRLTDTFPSCGMNWPPDLKHLAPYLRRDDVTSALHINKDKKTGWTECAGAVSSSFRPRKSKPSADLLPGLLESGVRIGLFSGAKDLICNHIGTEEFINKMEWSGGKGFELSPGVWAPRRDWTFEGETAGYYQEARNLTYVLFYNASHMVPFDYARRSRDMLDRFLGVDITSIGGNPTDSRIDGEKGALTSVGNHPNSTLAEQREKEKLKAATWKAYYKSGEVALVVVVIAAGAWGFFLWRSRRQRQGSGYLGIYPSLNGLSSGSLPRYRNKRSSRDIEAAAEFEASELETLHDMDDRSPGPSRDNYSVGEDSETEDEKRYPPTDFDRQDGTPSASRT</sequence>
<protein>
    <recommendedName>
        <fullName>Pheromone-processing carboxypeptidase KEX1</fullName>
        <ecNumber>3.4.16.6</ecNumber>
    </recommendedName>
    <alternativeName>
        <fullName>Carboxypeptidase D</fullName>
    </alternativeName>
</protein>
<proteinExistence type="inferred from homology"/>